<reference key="1">
    <citation type="journal article" date="2009" name="J. Bacteriol.">
        <title>Complete genome sequence and comparative genome analysis of enteropathogenic Escherichia coli O127:H6 strain E2348/69.</title>
        <authorList>
            <person name="Iguchi A."/>
            <person name="Thomson N.R."/>
            <person name="Ogura Y."/>
            <person name="Saunders D."/>
            <person name="Ooka T."/>
            <person name="Henderson I.R."/>
            <person name="Harris D."/>
            <person name="Asadulghani M."/>
            <person name="Kurokawa K."/>
            <person name="Dean P."/>
            <person name="Kenny B."/>
            <person name="Quail M.A."/>
            <person name="Thurston S."/>
            <person name="Dougan G."/>
            <person name="Hayashi T."/>
            <person name="Parkhill J."/>
            <person name="Frankel G."/>
        </authorList>
    </citation>
    <scope>NUCLEOTIDE SEQUENCE [LARGE SCALE GENOMIC DNA]</scope>
    <source>
        <strain>E2348/69 / EPEC</strain>
    </source>
</reference>
<organism>
    <name type="scientific">Escherichia coli O127:H6 (strain E2348/69 / EPEC)</name>
    <dbReference type="NCBI Taxonomy" id="574521"/>
    <lineage>
        <taxon>Bacteria</taxon>
        <taxon>Pseudomonadati</taxon>
        <taxon>Pseudomonadota</taxon>
        <taxon>Gammaproteobacteria</taxon>
        <taxon>Enterobacterales</taxon>
        <taxon>Enterobacteriaceae</taxon>
        <taxon>Escherichia</taxon>
    </lineage>
</organism>
<dbReference type="EC" id="6.3.2.1" evidence="1"/>
<dbReference type="EMBL" id="FM180568">
    <property type="protein sequence ID" value="CAS07684.1"/>
    <property type="molecule type" value="Genomic_DNA"/>
</dbReference>
<dbReference type="RefSeq" id="WP_000905380.1">
    <property type="nucleotide sequence ID" value="NC_011601.1"/>
</dbReference>
<dbReference type="SMR" id="B7UII1"/>
<dbReference type="KEGG" id="ecg:E2348C_0136"/>
<dbReference type="HOGENOM" id="CLU_047148_0_0_6"/>
<dbReference type="UniPathway" id="UPA00028">
    <property type="reaction ID" value="UER00005"/>
</dbReference>
<dbReference type="Proteomes" id="UP000008205">
    <property type="component" value="Chromosome"/>
</dbReference>
<dbReference type="GO" id="GO:0005829">
    <property type="term" value="C:cytosol"/>
    <property type="evidence" value="ECO:0007669"/>
    <property type="project" value="TreeGrafter"/>
</dbReference>
<dbReference type="GO" id="GO:0005524">
    <property type="term" value="F:ATP binding"/>
    <property type="evidence" value="ECO:0007669"/>
    <property type="project" value="UniProtKB-KW"/>
</dbReference>
<dbReference type="GO" id="GO:0004592">
    <property type="term" value="F:pantoate-beta-alanine ligase activity"/>
    <property type="evidence" value="ECO:0007669"/>
    <property type="project" value="UniProtKB-UniRule"/>
</dbReference>
<dbReference type="GO" id="GO:0015940">
    <property type="term" value="P:pantothenate biosynthetic process"/>
    <property type="evidence" value="ECO:0007669"/>
    <property type="project" value="UniProtKB-UniRule"/>
</dbReference>
<dbReference type="CDD" id="cd00560">
    <property type="entry name" value="PanC"/>
    <property type="match status" value="1"/>
</dbReference>
<dbReference type="FunFam" id="3.30.1300.10:FF:000001">
    <property type="entry name" value="Pantothenate synthetase"/>
    <property type="match status" value="1"/>
</dbReference>
<dbReference type="FunFam" id="3.40.50.620:FF:000013">
    <property type="entry name" value="Pantothenate synthetase"/>
    <property type="match status" value="1"/>
</dbReference>
<dbReference type="Gene3D" id="3.40.50.620">
    <property type="entry name" value="HUPs"/>
    <property type="match status" value="1"/>
</dbReference>
<dbReference type="Gene3D" id="3.30.1300.10">
    <property type="entry name" value="Pantoate-beta-alanine ligase, C-terminal domain"/>
    <property type="match status" value="1"/>
</dbReference>
<dbReference type="HAMAP" id="MF_00158">
    <property type="entry name" value="PanC"/>
    <property type="match status" value="1"/>
</dbReference>
<dbReference type="InterPro" id="IPR004821">
    <property type="entry name" value="Cyt_trans-like"/>
</dbReference>
<dbReference type="InterPro" id="IPR003721">
    <property type="entry name" value="Pantoate_ligase"/>
</dbReference>
<dbReference type="InterPro" id="IPR042176">
    <property type="entry name" value="Pantoate_ligase_C"/>
</dbReference>
<dbReference type="InterPro" id="IPR014729">
    <property type="entry name" value="Rossmann-like_a/b/a_fold"/>
</dbReference>
<dbReference type="NCBIfam" id="TIGR00125">
    <property type="entry name" value="cyt_tran_rel"/>
    <property type="match status" value="1"/>
</dbReference>
<dbReference type="NCBIfam" id="TIGR00018">
    <property type="entry name" value="panC"/>
    <property type="match status" value="1"/>
</dbReference>
<dbReference type="PANTHER" id="PTHR21299">
    <property type="entry name" value="CYTIDYLATE KINASE/PANTOATE-BETA-ALANINE LIGASE"/>
    <property type="match status" value="1"/>
</dbReference>
<dbReference type="PANTHER" id="PTHR21299:SF1">
    <property type="entry name" value="PANTOATE--BETA-ALANINE LIGASE"/>
    <property type="match status" value="1"/>
</dbReference>
<dbReference type="Pfam" id="PF02569">
    <property type="entry name" value="Pantoate_ligase"/>
    <property type="match status" value="1"/>
</dbReference>
<dbReference type="SUPFAM" id="SSF52374">
    <property type="entry name" value="Nucleotidylyl transferase"/>
    <property type="match status" value="1"/>
</dbReference>
<comment type="function">
    <text evidence="1">Catalyzes the condensation of pantoate with beta-alanine in an ATP-dependent reaction via a pantoyl-adenylate intermediate.</text>
</comment>
<comment type="catalytic activity">
    <reaction evidence="1">
        <text>(R)-pantoate + beta-alanine + ATP = (R)-pantothenate + AMP + diphosphate + H(+)</text>
        <dbReference type="Rhea" id="RHEA:10912"/>
        <dbReference type="ChEBI" id="CHEBI:15378"/>
        <dbReference type="ChEBI" id="CHEBI:15980"/>
        <dbReference type="ChEBI" id="CHEBI:29032"/>
        <dbReference type="ChEBI" id="CHEBI:30616"/>
        <dbReference type="ChEBI" id="CHEBI:33019"/>
        <dbReference type="ChEBI" id="CHEBI:57966"/>
        <dbReference type="ChEBI" id="CHEBI:456215"/>
        <dbReference type="EC" id="6.3.2.1"/>
    </reaction>
</comment>
<comment type="pathway">
    <text evidence="1">Cofactor biosynthesis; (R)-pantothenate biosynthesis; (R)-pantothenate from (R)-pantoate and beta-alanine: step 1/1.</text>
</comment>
<comment type="subunit">
    <text evidence="1">Homodimer.</text>
</comment>
<comment type="subcellular location">
    <subcellularLocation>
        <location evidence="1">Cytoplasm</location>
    </subcellularLocation>
</comment>
<comment type="miscellaneous">
    <text evidence="1">The reaction proceeds by a bi uni uni bi ping pong mechanism.</text>
</comment>
<comment type="similarity">
    <text evidence="1">Belongs to the pantothenate synthetase family.</text>
</comment>
<accession>B7UII1</accession>
<name>PANC_ECO27</name>
<proteinExistence type="inferred from homology"/>
<protein>
    <recommendedName>
        <fullName evidence="1">Pantothenate synthetase</fullName>
        <shortName evidence="1">PS</shortName>
        <ecNumber evidence="1">6.3.2.1</ecNumber>
    </recommendedName>
    <alternativeName>
        <fullName evidence="1">Pantoate--beta-alanine ligase</fullName>
    </alternativeName>
    <alternativeName>
        <fullName evidence="1">Pantoate-activating enzyme</fullName>
    </alternativeName>
</protein>
<sequence>MLIIETLPLLRQQIRRLRMEGKRVALVPTMGNLHDGHMKLVDEAKARADVVVVSIFVNPMQFDRPEDLARYPRTLQEDCEKLNKRKVDLVFAPSVKEIYPNGTETHTYVDVPGLSTMLEGASRPGHFRGVSTIVSKLFNLVQPDIACFGEKDFQQLALIRKMVADMGFDIEIVGVPIMRAKDGLALSSRNGYLTAEQRKIAPGLYKVLSSIADKLQAGERDLDEIIAIAGQELNEKGFRSDDIQIRDADTLLEVSENSKRAVILVAAWLGDARLIDNKLVELA</sequence>
<evidence type="ECO:0000255" key="1">
    <source>
        <dbReference type="HAMAP-Rule" id="MF_00158"/>
    </source>
</evidence>
<feature type="chain" id="PRO_1000123412" description="Pantothenate synthetase">
    <location>
        <begin position="1"/>
        <end position="283"/>
    </location>
</feature>
<feature type="active site" description="Proton donor" evidence="1">
    <location>
        <position position="37"/>
    </location>
</feature>
<feature type="binding site" evidence="1">
    <location>
        <begin position="30"/>
        <end position="37"/>
    </location>
    <ligand>
        <name>ATP</name>
        <dbReference type="ChEBI" id="CHEBI:30616"/>
    </ligand>
</feature>
<feature type="binding site" evidence="1">
    <location>
        <position position="61"/>
    </location>
    <ligand>
        <name>(R)-pantoate</name>
        <dbReference type="ChEBI" id="CHEBI:15980"/>
    </ligand>
</feature>
<feature type="binding site" evidence="1">
    <location>
        <position position="61"/>
    </location>
    <ligand>
        <name>beta-alanine</name>
        <dbReference type="ChEBI" id="CHEBI:57966"/>
    </ligand>
</feature>
<feature type="binding site" evidence="1">
    <location>
        <begin position="149"/>
        <end position="152"/>
    </location>
    <ligand>
        <name>ATP</name>
        <dbReference type="ChEBI" id="CHEBI:30616"/>
    </ligand>
</feature>
<feature type="binding site" evidence="1">
    <location>
        <position position="155"/>
    </location>
    <ligand>
        <name>(R)-pantoate</name>
        <dbReference type="ChEBI" id="CHEBI:15980"/>
    </ligand>
</feature>
<feature type="binding site" evidence="1">
    <location>
        <begin position="186"/>
        <end position="189"/>
    </location>
    <ligand>
        <name>ATP</name>
        <dbReference type="ChEBI" id="CHEBI:30616"/>
    </ligand>
</feature>
<keyword id="KW-0067">ATP-binding</keyword>
<keyword id="KW-0963">Cytoplasm</keyword>
<keyword id="KW-0436">Ligase</keyword>
<keyword id="KW-0547">Nucleotide-binding</keyword>
<keyword id="KW-0566">Pantothenate biosynthesis</keyword>
<keyword id="KW-1185">Reference proteome</keyword>
<gene>
    <name evidence="1" type="primary">panC</name>
    <name type="ordered locus">E2348C_0136</name>
</gene>